<feature type="chain" id="PRO_0000154027" description="TATA-box-binding protein">
    <location>
        <begin position="1"/>
        <end position="198"/>
    </location>
</feature>
<feature type="repeat" description="1">
    <location>
        <begin position="15"/>
        <end position="91"/>
    </location>
</feature>
<feature type="repeat" description="2">
    <location>
        <begin position="106"/>
        <end position="182"/>
    </location>
</feature>
<sequence length="198" mass="22484">MTNIPEIPYKAVVNIENIVATVTLDQNLDLYAMERSVPNVEYDPDQFPGLIFRLEAPKVTSLIFKSGKMVVTGAKSTDELIKAVKRIIKTLKRYGMNLTGKPKIQIQNIVASANLHVIVNLDKAAFLLENNMYEPEQFPGLIYRMEDPRVVLLIFSSGKMVITGAKREEEVHKAVKKIFDKLVELDCVKPFEEEELEF</sequence>
<proteinExistence type="inferred from homology"/>
<gene>
    <name type="primary">tbp</name>
    <name type="ordered locus">STK_12750</name>
</gene>
<name>TBP_SULTO</name>
<accession>Q971V3</accession>
<accession>F9VNZ8</accession>
<dbReference type="EMBL" id="BA000023">
    <property type="protein sequence ID" value="BAK54506.1"/>
    <property type="status" value="ALT_FRAME"/>
    <property type="molecule type" value="Genomic_DNA"/>
</dbReference>
<dbReference type="SMR" id="Q971V3"/>
<dbReference type="STRING" id="273063.STK_12750"/>
<dbReference type="KEGG" id="sto:STK_12750"/>
<dbReference type="PATRIC" id="fig|273063.9.peg.1434"/>
<dbReference type="eggNOG" id="arCOG01764">
    <property type="taxonomic scope" value="Archaea"/>
</dbReference>
<dbReference type="Proteomes" id="UP000001015">
    <property type="component" value="Chromosome"/>
</dbReference>
<dbReference type="GO" id="GO:0003677">
    <property type="term" value="F:DNA binding"/>
    <property type="evidence" value="ECO:0007669"/>
    <property type="project" value="UniProtKB-KW"/>
</dbReference>
<dbReference type="GO" id="GO:0003700">
    <property type="term" value="F:DNA-binding transcription factor activity"/>
    <property type="evidence" value="ECO:0007669"/>
    <property type="project" value="UniProtKB-UniRule"/>
</dbReference>
<dbReference type="GO" id="GO:0006352">
    <property type="term" value="P:DNA-templated transcription initiation"/>
    <property type="evidence" value="ECO:0007669"/>
    <property type="project" value="InterPro"/>
</dbReference>
<dbReference type="CDD" id="cd04518">
    <property type="entry name" value="TBP_archaea"/>
    <property type="match status" value="1"/>
</dbReference>
<dbReference type="FunFam" id="3.30.310.10:FF:000007">
    <property type="entry name" value="TATA-box-binding protein"/>
    <property type="match status" value="1"/>
</dbReference>
<dbReference type="FunFam" id="3.30.310.10:FF:000010">
    <property type="entry name" value="TATA-box-binding protein"/>
    <property type="match status" value="1"/>
</dbReference>
<dbReference type="Gene3D" id="3.30.310.10">
    <property type="entry name" value="TATA-Binding Protein"/>
    <property type="match status" value="2"/>
</dbReference>
<dbReference type="HAMAP" id="MF_00408">
    <property type="entry name" value="TATA_bind_prot_arch"/>
    <property type="match status" value="1"/>
</dbReference>
<dbReference type="InterPro" id="IPR000814">
    <property type="entry name" value="TBP"/>
</dbReference>
<dbReference type="InterPro" id="IPR033711">
    <property type="entry name" value="TBP_archaea"/>
</dbReference>
<dbReference type="InterPro" id="IPR030491">
    <property type="entry name" value="TBP_CS"/>
</dbReference>
<dbReference type="InterPro" id="IPR012295">
    <property type="entry name" value="TBP_dom_sf"/>
</dbReference>
<dbReference type="NCBIfam" id="NF001592">
    <property type="entry name" value="PRK00394.1-1"/>
    <property type="match status" value="1"/>
</dbReference>
<dbReference type="NCBIfam" id="NF001593">
    <property type="entry name" value="PRK00394.1-2"/>
    <property type="match status" value="1"/>
</dbReference>
<dbReference type="PANTHER" id="PTHR10126">
    <property type="entry name" value="TATA-BOX BINDING PROTEIN"/>
    <property type="match status" value="1"/>
</dbReference>
<dbReference type="Pfam" id="PF00352">
    <property type="entry name" value="TBP"/>
    <property type="match status" value="2"/>
</dbReference>
<dbReference type="PRINTS" id="PR00686">
    <property type="entry name" value="TIFACTORIID"/>
</dbReference>
<dbReference type="SUPFAM" id="SSF55945">
    <property type="entry name" value="TATA-box binding protein-like"/>
    <property type="match status" value="2"/>
</dbReference>
<dbReference type="PROSITE" id="PS00351">
    <property type="entry name" value="TFIID"/>
    <property type="match status" value="2"/>
</dbReference>
<comment type="function">
    <text evidence="1">General factor that plays a role in the activation of archaeal genes transcribed by RNA polymerase. Binds specifically to the TATA box promoter element which lies close to the position of transcription initiation (By similarity).</text>
</comment>
<comment type="similarity">
    <text evidence="2">Belongs to the TBP family.</text>
</comment>
<comment type="sequence caution" evidence="2">
    <conflict type="frameshift">
        <sequence resource="EMBL-CDS" id="BAK54506"/>
    </conflict>
</comment>
<reference key="1">
    <citation type="journal article" date="2001" name="DNA Res.">
        <title>Complete genome sequence of an aerobic thermoacidophilic Crenarchaeon, Sulfolobus tokodaii strain7.</title>
        <authorList>
            <person name="Kawarabayasi Y."/>
            <person name="Hino Y."/>
            <person name="Horikawa H."/>
            <person name="Jin-no K."/>
            <person name="Takahashi M."/>
            <person name="Sekine M."/>
            <person name="Baba S."/>
            <person name="Ankai A."/>
            <person name="Kosugi H."/>
            <person name="Hosoyama A."/>
            <person name="Fukui S."/>
            <person name="Nagai Y."/>
            <person name="Nishijima K."/>
            <person name="Otsuka R."/>
            <person name="Nakazawa H."/>
            <person name="Takamiya M."/>
            <person name="Kato Y."/>
            <person name="Yoshizawa T."/>
            <person name="Tanaka T."/>
            <person name="Kudoh Y."/>
            <person name="Yamazaki J."/>
            <person name="Kushida N."/>
            <person name="Oguchi A."/>
            <person name="Aoki K."/>
            <person name="Masuda S."/>
            <person name="Yanagii M."/>
            <person name="Nishimura M."/>
            <person name="Yamagishi A."/>
            <person name="Oshima T."/>
            <person name="Kikuchi H."/>
        </authorList>
    </citation>
    <scope>NUCLEOTIDE SEQUENCE [LARGE SCALE GENOMIC DNA]</scope>
    <source>
        <strain>DSM 16993 / JCM 10545 / NBRC 100140 / 7</strain>
    </source>
</reference>
<organism>
    <name type="scientific">Sulfurisphaera tokodaii (strain DSM 16993 / JCM 10545 / NBRC 100140 / 7)</name>
    <name type="common">Sulfolobus tokodaii</name>
    <dbReference type="NCBI Taxonomy" id="273063"/>
    <lineage>
        <taxon>Archaea</taxon>
        <taxon>Thermoproteota</taxon>
        <taxon>Thermoprotei</taxon>
        <taxon>Sulfolobales</taxon>
        <taxon>Sulfolobaceae</taxon>
        <taxon>Sulfurisphaera</taxon>
    </lineage>
</organism>
<keyword id="KW-0238">DNA-binding</keyword>
<keyword id="KW-1185">Reference proteome</keyword>
<keyword id="KW-0677">Repeat</keyword>
<keyword id="KW-0804">Transcription</keyword>
<keyword id="KW-0805">Transcription regulation</keyword>
<evidence type="ECO:0000250" key="1"/>
<evidence type="ECO:0000305" key="2"/>
<protein>
    <recommendedName>
        <fullName>TATA-box-binding protein</fullName>
    </recommendedName>
    <alternativeName>
        <fullName>Box A-binding protein</fullName>
        <shortName>BAP</shortName>
    </alternativeName>
    <alternativeName>
        <fullName>TATA sequence-binding protein</fullName>
        <shortName>TBP</shortName>
    </alternativeName>
    <alternativeName>
        <fullName>TATA-box factor</fullName>
    </alternativeName>
</protein>